<organism>
    <name type="scientific">Rhizobium etli (strain ATCC 51251 / DSM 11541 / JCM 21823 / NBRC 15573 / CFN 42)</name>
    <dbReference type="NCBI Taxonomy" id="347834"/>
    <lineage>
        <taxon>Bacteria</taxon>
        <taxon>Pseudomonadati</taxon>
        <taxon>Pseudomonadota</taxon>
        <taxon>Alphaproteobacteria</taxon>
        <taxon>Hyphomicrobiales</taxon>
        <taxon>Rhizobiaceae</taxon>
        <taxon>Rhizobium/Agrobacterium group</taxon>
        <taxon>Rhizobium</taxon>
    </lineage>
</organism>
<accession>Q2K7U6</accession>
<dbReference type="EC" id="2.8.1.-" evidence="1"/>
<dbReference type="EMBL" id="CP000133">
    <property type="protein sequence ID" value="ABC91090.1"/>
    <property type="molecule type" value="Genomic_DNA"/>
</dbReference>
<dbReference type="RefSeq" id="WP_011425570.1">
    <property type="nucleotide sequence ID" value="NC_007761.1"/>
</dbReference>
<dbReference type="SMR" id="Q2K7U6"/>
<dbReference type="KEGG" id="ret:RHE_CH02310"/>
<dbReference type="eggNOG" id="COG0037">
    <property type="taxonomic scope" value="Bacteria"/>
</dbReference>
<dbReference type="HOGENOM" id="CLU_026481_0_0_5"/>
<dbReference type="OrthoDB" id="9801054at2"/>
<dbReference type="Proteomes" id="UP000001936">
    <property type="component" value="Chromosome"/>
</dbReference>
<dbReference type="GO" id="GO:0005737">
    <property type="term" value="C:cytoplasm"/>
    <property type="evidence" value="ECO:0007669"/>
    <property type="project" value="UniProtKB-SubCell"/>
</dbReference>
<dbReference type="GO" id="GO:0051539">
    <property type="term" value="F:4 iron, 4 sulfur cluster binding"/>
    <property type="evidence" value="ECO:0007669"/>
    <property type="project" value="UniProtKB-UniRule"/>
</dbReference>
<dbReference type="GO" id="GO:0005524">
    <property type="term" value="F:ATP binding"/>
    <property type="evidence" value="ECO:0007669"/>
    <property type="project" value="UniProtKB-UniRule"/>
</dbReference>
<dbReference type="GO" id="GO:0000287">
    <property type="term" value="F:magnesium ion binding"/>
    <property type="evidence" value="ECO:0007669"/>
    <property type="project" value="UniProtKB-UniRule"/>
</dbReference>
<dbReference type="GO" id="GO:0016783">
    <property type="term" value="F:sulfurtransferase activity"/>
    <property type="evidence" value="ECO:0007669"/>
    <property type="project" value="UniProtKB-UniRule"/>
</dbReference>
<dbReference type="GO" id="GO:0000049">
    <property type="term" value="F:tRNA binding"/>
    <property type="evidence" value="ECO:0007669"/>
    <property type="project" value="UniProtKB-KW"/>
</dbReference>
<dbReference type="GO" id="GO:0034227">
    <property type="term" value="P:tRNA thio-modification"/>
    <property type="evidence" value="ECO:0007669"/>
    <property type="project" value="UniProtKB-UniRule"/>
</dbReference>
<dbReference type="CDD" id="cd24138">
    <property type="entry name" value="TtcA-like"/>
    <property type="match status" value="1"/>
</dbReference>
<dbReference type="Gene3D" id="3.40.50.620">
    <property type="entry name" value="HUPs"/>
    <property type="match status" value="1"/>
</dbReference>
<dbReference type="HAMAP" id="MF_01850">
    <property type="entry name" value="TtcA"/>
    <property type="match status" value="1"/>
</dbReference>
<dbReference type="InterPro" id="IPR014729">
    <property type="entry name" value="Rossmann-like_a/b/a_fold"/>
</dbReference>
<dbReference type="InterPro" id="IPR011063">
    <property type="entry name" value="TilS/TtcA_N"/>
</dbReference>
<dbReference type="InterPro" id="IPR012089">
    <property type="entry name" value="tRNA_Cyd_32_2_STrfase"/>
</dbReference>
<dbReference type="InterPro" id="IPR035107">
    <property type="entry name" value="tRNA_thiolation_TtcA_Ctu1"/>
</dbReference>
<dbReference type="NCBIfam" id="NF007972">
    <property type="entry name" value="PRK10696.1"/>
    <property type="match status" value="1"/>
</dbReference>
<dbReference type="PANTHER" id="PTHR43686:SF1">
    <property type="entry name" value="AMINOTRAN_5 DOMAIN-CONTAINING PROTEIN"/>
    <property type="match status" value="1"/>
</dbReference>
<dbReference type="PANTHER" id="PTHR43686">
    <property type="entry name" value="SULFURTRANSFERASE-RELATED"/>
    <property type="match status" value="1"/>
</dbReference>
<dbReference type="Pfam" id="PF01171">
    <property type="entry name" value="ATP_bind_3"/>
    <property type="match status" value="1"/>
</dbReference>
<dbReference type="PIRSF" id="PIRSF004976">
    <property type="entry name" value="ATPase_YdaO"/>
    <property type="match status" value="1"/>
</dbReference>
<dbReference type="SUPFAM" id="SSF52402">
    <property type="entry name" value="Adenine nucleotide alpha hydrolases-like"/>
    <property type="match status" value="1"/>
</dbReference>
<sequence length="290" mass="32507">MNIAANIADDPETGDIDDGAGPALFADAPRSVSFNKLRKRLLRQVRQAFDDFDMLKGQKRWLVGLSGGKDSYGLLALLLDLKWRGLLSVELIACNLDQGQPNFPKHVLPDYLTKIGVRHRIEYRDTYSIVKEKVPEGATYCSLCSRLRRGNLYRIAREEGCDALVLGHHREDILETFFMNFFHGGRLASMPAKLLNDEGDLMVLRPLAYAAEDDLARFAAAMQFPIIPCDLCGSQDGLQRNAMKDMLADIERRMPGRKDTMLRALSHVNPSHLLDPKLFDFSSLGVTDPS</sequence>
<gene>
    <name evidence="1" type="primary">ttcA</name>
    <name type="ordered locus">RHE_CH02310</name>
</gene>
<reference key="1">
    <citation type="journal article" date="2006" name="Proc. Natl. Acad. Sci. U.S.A.">
        <title>The partitioned Rhizobium etli genome: genetic and metabolic redundancy in seven interacting replicons.</title>
        <authorList>
            <person name="Gonzalez V."/>
            <person name="Santamaria R.I."/>
            <person name="Bustos P."/>
            <person name="Hernandez-Gonzalez I."/>
            <person name="Medrano-Soto A."/>
            <person name="Moreno-Hagelsieb G."/>
            <person name="Janga S.C."/>
            <person name="Ramirez M.A."/>
            <person name="Jimenez-Jacinto V."/>
            <person name="Collado-Vides J."/>
            <person name="Davila G."/>
        </authorList>
    </citation>
    <scope>NUCLEOTIDE SEQUENCE [LARGE SCALE GENOMIC DNA]</scope>
    <source>
        <strain>ATCC 51251 / DSM 11541 / JCM 21823 / NBRC 15573 / CFN 42</strain>
    </source>
</reference>
<evidence type="ECO:0000255" key="1">
    <source>
        <dbReference type="HAMAP-Rule" id="MF_01850"/>
    </source>
</evidence>
<keyword id="KW-0004">4Fe-4S</keyword>
<keyword id="KW-0067">ATP-binding</keyword>
<keyword id="KW-0963">Cytoplasm</keyword>
<keyword id="KW-0408">Iron</keyword>
<keyword id="KW-0411">Iron-sulfur</keyword>
<keyword id="KW-0460">Magnesium</keyword>
<keyword id="KW-0479">Metal-binding</keyword>
<keyword id="KW-0547">Nucleotide-binding</keyword>
<keyword id="KW-1185">Reference proteome</keyword>
<keyword id="KW-0694">RNA-binding</keyword>
<keyword id="KW-0808">Transferase</keyword>
<keyword id="KW-0819">tRNA processing</keyword>
<keyword id="KW-0820">tRNA-binding</keyword>
<feature type="chain" id="PRO_0000348814" description="tRNA-cytidine(32) 2-sulfurtransferase">
    <location>
        <begin position="1"/>
        <end position="290"/>
    </location>
</feature>
<feature type="short sequence motif" description="PP-loop motif" evidence="1">
    <location>
        <begin position="66"/>
        <end position="71"/>
    </location>
</feature>
<feature type="binding site" evidence="1">
    <location>
        <position position="141"/>
    </location>
    <ligand>
        <name>[4Fe-4S] cluster</name>
        <dbReference type="ChEBI" id="CHEBI:49883"/>
    </ligand>
</feature>
<feature type="binding site" evidence="1">
    <location>
        <position position="144"/>
    </location>
    <ligand>
        <name>[4Fe-4S] cluster</name>
        <dbReference type="ChEBI" id="CHEBI:49883"/>
    </ligand>
</feature>
<feature type="binding site" evidence="1">
    <location>
        <position position="232"/>
    </location>
    <ligand>
        <name>[4Fe-4S] cluster</name>
        <dbReference type="ChEBI" id="CHEBI:49883"/>
    </ligand>
</feature>
<proteinExistence type="inferred from homology"/>
<protein>
    <recommendedName>
        <fullName evidence="1">tRNA-cytidine(32) 2-sulfurtransferase</fullName>
        <ecNumber evidence="1">2.8.1.-</ecNumber>
    </recommendedName>
    <alternativeName>
        <fullName evidence="1">Two-thiocytidine biosynthesis protein A</fullName>
    </alternativeName>
    <alternativeName>
        <fullName evidence="1">tRNA 2-thiocytidine biosynthesis protein TtcA</fullName>
    </alternativeName>
</protein>
<name>TTCA_RHIEC</name>
<comment type="function">
    <text evidence="1">Catalyzes the ATP-dependent 2-thiolation of cytidine in position 32 of tRNA, to form 2-thiocytidine (s(2)C32). The sulfur atoms are provided by the cysteine/cysteine desulfurase (IscS) system.</text>
</comment>
<comment type="catalytic activity">
    <reaction evidence="1">
        <text>cytidine(32) in tRNA + S-sulfanyl-L-cysteinyl-[cysteine desulfurase] + AH2 + ATP = 2-thiocytidine(32) in tRNA + L-cysteinyl-[cysteine desulfurase] + A + AMP + diphosphate + H(+)</text>
        <dbReference type="Rhea" id="RHEA:57048"/>
        <dbReference type="Rhea" id="RHEA-COMP:10288"/>
        <dbReference type="Rhea" id="RHEA-COMP:12157"/>
        <dbReference type="Rhea" id="RHEA-COMP:12158"/>
        <dbReference type="Rhea" id="RHEA-COMP:14821"/>
        <dbReference type="ChEBI" id="CHEBI:13193"/>
        <dbReference type="ChEBI" id="CHEBI:15378"/>
        <dbReference type="ChEBI" id="CHEBI:17499"/>
        <dbReference type="ChEBI" id="CHEBI:29950"/>
        <dbReference type="ChEBI" id="CHEBI:30616"/>
        <dbReference type="ChEBI" id="CHEBI:33019"/>
        <dbReference type="ChEBI" id="CHEBI:61963"/>
        <dbReference type="ChEBI" id="CHEBI:82748"/>
        <dbReference type="ChEBI" id="CHEBI:141453"/>
        <dbReference type="ChEBI" id="CHEBI:456215"/>
    </reaction>
    <physiologicalReaction direction="left-to-right" evidence="1">
        <dbReference type="Rhea" id="RHEA:57049"/>
    </physiologicalReaction>
</comment>
<comment type="cofactor">
    <cofactor evidence="1">
        <name>Mg(2+)</name>
        <dbReference type="ChEBI" id="CHEBI:18420"/>
    </cofactor>
</comment>
<comment type="cofactor">
    <cofactor evidence="1">
        <name>[4Fe-4S] cluster</name>
        <dbReference type="ChEBI" id="CHEBI:49883"/>
    </cofactor>
    <text evidence="1">Binds 1 [4Fe-4S] cluster per subunit. The cluster is chelated by three Cys residues, the fourth Fe has a free coordination site that may bind a sulfur atom transferred from the persulfide of IscS.</text>
</comment>
<comment type="pathway">
    <text evidence="1">tRNA modification.</text>
</comment>
<comment type="subunit">
    <text evidence="1">Homodimer.</text>
</comment>
<comment type="subcellular location">
    <subcellularLocation>
        <location evidence="1">Cytoplasm</location>
    </subcellularLocation>
</comment>
<comment type="miscellaneous">
    <text evidence="1">The thiolation reaction likely consists of two steps: a first activation step by ATP to form an adenylated intermediate of the target base of tRNA, and a second nucleophilic substitution step of the sulfur (S) atom supplied by the hydrosulfide attached to the Fe-S cluster.</text>
</comment>
<comment type="similarity">
    <text evidence="1">Belongs to the TtcA family.</text>
</comment>